<feature type="chain" id="PRO_0000147766" description="7,8-didemethyl-8-hydroxy-5-deazariboflavin synthase">
    <location>
        <begin position="1"/>
        <end position="335"/>
    </location>
</feature>
<feature type="domain" description="Radical SAM core" evidence="2">
    <location>
        <begin position="1"/>
        <end position="246"/>
    </location>
</feature>
<feature type="binding site" evidence="1">
    <location>
        <position position="15"/>
    </location>
    <ligand>
        <name>[4Fe-4S] cluster</name>
        <dbReference type="ChEBI" id="CHEBI:49883"/>
        <note>4Fe-4S-S-AdoMet</note>
    </ligand>
</feature>
<feature type="binding site" evidence="1">
    <location>
        <position position="19"/>
    </location>
    <ligand>
        <name>[4Fe-4S] cluster</name>
        <dbReference type="ChEBI" id="CHEBI:49883"/>
        <note>4Fe-4S-S-AdoMet</note>
    </ligand>
</feature>
<feature type="binding site" evidence="1">
    <location>
        <position position="22"/>
    </location>
    <ligand>
        <name>[4Fe-4S] cluster</name>
        <dbReference type="ChEBI" id="CHEBI:49883"/>
        <note>4Fe-4S-S-AdoMet</note>
    </ligand>
</feature>
<organism>
    <name type="scientific">Methanosarcina mazei (strain ATCC BAA-159 / DSM 3647 / Goe1 / Go1 / JCM 11833 / OCM 88)</name>
    <name type="common">Methanosarcina frisia</name>
    <dbReference type="NCBI Taxonomy" id="192952"/>
    <lineage>
        <taxon>Archaea</taxon>
        <taxon>Methanobacteriati</taxon>
        <taxon>Methanobacteriota</taxon>
        <taxon>Stenosarchaea group</taxon>
        <taxon>Methanomicrobia</taxon>
        <taxon>Methanosarcinales</taxon>
        <taxon>Methanosarcinaceae</taxon>
        <taxon>Methanosarcina</taxon>
    </lineage>
</organism>
<reference key="1">
    <citation type="journal article" date="2002" name="J. Mol. Microbiol. Biotechnol.">
        <title>The genome of Methanosarcina mazei: evidence for lateral gene transfer between Bacteria and Archaea.</title>
        <authorList>
            <person name="Deppenmeier U."/>
            <person name="Johann A."/>
            <person name="Hartsch T."/>
            <person name="Merkl R."/>
            <person name="Schmitz R.A."/>
            <person name="Martinez-Arias R."/>
            <person name="Henne A."/>
            <person name="Wiezer A."/>
            <person name="Baeumer S."/>
            <person name="Jacobi C."/>
            <person name="Brueggemann H."/>
            <person name="Lienard T."/>
            <person name="Christmann A."/>
            <person name="Boemecke M."/>
            <person name="Steckel S."/>
            <person name="Bhattacharyya A."/>
            <person name="Lykidis A."/>
            <person name="Overbeek R."/>
            <person name="Klenk H.-P."/>
            <person name="Gunsalus R.P."/>
            <person name="Fritz H.-J."/>
            <person name="Gottschalk G."/>
        </authorList>
    </citation>
    <scope>NUCLEOTIDE SEQUENCE [LARGE SCALE GENOMIC DNA]</scope>
    <source>
        <strain>ATCC BAA-159 / DSM 3647 / Goe1 / Go1 / JCM 11833 / OCM 88</strain>
    </source>
</reference>
<name>COFG_METMA</name>
<keyword id="KW-0004">4Fe-4S</keyword>
<keyword id="KW-0408">Iron</keyword>
<keyword id="KW-0411">Iron-sulfur</keyword>
<keyword id="KW-0456">Lyase</keyword>
<keyword id="KW-0479">Metal-binding</keyword>
<keyword id="KW-0949">S-adenosyl-L-methionine</keyword>
<sequence length="335" mass="36997">MTYSKNVFIPVTNICRNQCGYCGFRREPGQPGARLMKPEEVISVLENGVRAGCTEALFTFGERAEEVPGYGEMLEEIGYSSTLEYLVFLCETAIDIGILPHTNAGIMTRSELEALKPLNASMGLMLESTAVLAAHKDCPGKIPERRLETIREAGKLKIPYTTGLLIGIGESRDDRIESLEAIAALHREYGHIQEVIIQNFAPKPGTEMENFPEPAVEEMMDSVELAARILPGDVAVQVAPNLIDPKSLIAKGVTDLGGISPLTIDWINPEAEWPDVKNLQKKLGDIPLKERLPVYPPYVKKGWYSERIGSLIKRLSDNSGYRKQPGTENAEDSEK</sequence>
<protein>
    <recommendedName>
        <fullName evidence="1">7,8-didemethyl-8-hydroxy-5-deazariboflavin synthase</fullName>
        <ecNumber evidence="1">4.3.1.32</ecNumber>
    </recommendedName>
    <alternativeName>
        <fullName evidence="1">FO synthase subunit 1</fullName>
    </alternativeName>
</protein>
<evidence type="ECO:0000255" key="1">
    <source>
        <dbReference type="HAMAP-Rule" id="MF_01611"/>
    </source>
</evidence>
<evidence type="ECO:0000255" key="2">
    <source>
        <dbReference type="PROSITE-ProRule" id="PRU01266"/>
    </source>
</evidence>
<evidence type="ECO:0000305" key="3"/>
<dbReference type="EC" id="4.3.1.32" evidence="1"/>
<dbReference type="EMBL" id="AE008384">
    <property type="protein sequence ID" value="AAM32190.1"/>
    <property type="status" value="ALT_INIT"/>
    <property type="molecule type" value="Genomic_DNA"/>
</dbReference>
<dbReference type="SMR" id="Q8PU55"/>
<dbReference type="KEGG" id="mma:MM_2494"/>
<dbReference type="PATRIC" id="fig|192952.21.peg.2855"/>
<dbReference type="eggNOG" id="arCOG00657">
    <property type="taxonomic scope" value="Archaea"/>
</dbReference>
<dbReference type="HOGENOM" id="CLU_054174_0_0_2"/>
<dbReference type="UniPathway" id="UPA00072"/>
<dbReference type="Proteomes" id="UP000000595">
    <property type="component" value="Chromosome"/>
</dbReference>
<dbReference type="GO" id="GO:0051539">
    <property type="term" value="F:4 iron, 4 sulfur cluster binding"/>
    <property type="evidence" value="ECO:0007669"/>
    <property type="project" value="UniProtKB-KW"/>
</dbReference>
<dbReference type="GO" id="GO:0044689">
    <property type="term" value="F:7,8-didemethyl-8-hydroxy-5-deazariboflavin synthase activity"/>
    <property type="evidence" value="ECO:0007669"/>
    <property type="project" value="UniProtKB-EC"/>
</dbReference>
<dbReference type="GO" id="GO:0005506">
    <property type="term" value="F:iron ion binding"/>
    <property type="evidence" value="ECO:0007669"/>
    <property type="project" value="UniProtKB-UniRule"/>
</dbReference>
<dbReference type="GO" id="GO:0016765">
    <property type="term" value="F:transferase activity, transferring alkyl or aryl (other than methyl) groups"/>
    <property type="evidence" value="ECO:0007669"/>
    <property type="project" value="InterPro"/>
</dbReference>
<dbReference type="CDD" id="cd01335">
    <property type="entry name" value="Radical_SAM"/>
    <property type="match status" value="1"/>
</dbReference>
<dbReference type="Gene3D" id="3.20.20.70">
    <property type="entry name" value="Aldolase class I"/>
    <property type="match status" value="1"/>
</dbReference>
<dbReference type="HAMAP" id="MF_01611">
    <property type="entry name" value="FO_synth_sub1"/>
    <property type="match status" value="1"/>
</dbReference>
<dbReference type="InterPro" id="IPR013785">
    <property type="entry name" value="Aldolase_TIM"/>
</dbReference>
<dbReference type="InterPro" id="IPR019939">
    <property type="entry name" value="CofG_family"/>
</dbReference>
<dbReference type="InterPro" id="IPR006638">
    <property type="entry name" value="Elp3/MiaA/NifB-like_rSAM"/>
</dbReference>
<dbReference type="InterPro" id="IPR034405">
    <property type="entry name" value="F420"/>
</dbReference>
<dbReference type="InterPro" id="IPR007197">
    <property type="entry name" value="rSAM"/>
</dbReference>
<dbReference type="NCBIfam" id="TIGR03550">
    <property type="entry name" value="F420_cofG"/>
    <property type="match status" value="1"/>
</dbReference>
<dbReference type="NCBIfam" id="NF004884">
    <property type="entry name" value="PRK06245.1"/>
    <property type="match status" value="1"/>
</dbReference>
<dbReference type="PANTHER" id="PTHR43076:SF15">
    <property type="entry name" value="7,8-DIDEMETHYL-8-HYDROXY-5-DEAZARIBOFLAVIN SYNTHASE"/>
    <property type="match status" value="1"/>
</dbReference>
<dbReference type="PANTHER" id="PTHR43076">
    <property type="entry name" value="FO SYNTHASE (COFH)"/>
    <property type="match status" value="1"/>
</dbReference>
<dbReference type="Pfam" id="PF04055">
    <property type="entry name" value="Radical_SAM"/>
    <property type="match status" value="1"/>
</dbReference>
<dbReference type="SFLD" id="SFLDF00294">
    <property type="entry name" value="7_8-didemethyl-8-hydroxy-5-dea"/>
    <property type="match status" value="1"/>
</dbReference>
<dbReference type="SFLD" id="SFLDS00029">
    <property type="entry name" value="Radical_SAM"/>
    <property type="match status" value="1"/>
</dbReference>
<dbReference type="SMART" id="SM00729">
    <property type="entry name" value="Elp3"/>
    <property type="match status" value="1"/>
</dbReference>
<dbReference type="SUPFAM" id="SSF102114">
    <property type="entry name" value="Radical SAM enzymes"/>
    <property type="match status" value="1"/>
</dbReference>
<dbReference type="PROSITE" id="PS51918">
    <property type="entry name" value="RADICAL_SAM"/>
    <property type="match status" value="1"/>
</dbReference>
<gene>
    <name evidence="1" type="primary">cofG</name>
    <name type="ordered locus">MM_2494</name>
</gene>
<comment type="function">
    <text evidence="1">Catalyzes the radical-mediated synthesis of 7,8-didemethyl-8-hydroxy-5-deazariboflavin from 5-amino-5-(4-hydroxybenzyl)-6-(D-ribitylimino)-5,6-dihydrouracil.</text>
</comment>
<comment type="catalytic activity">
    <reaction evidence="1">
        <text>5-amino-5-(4-hydroxybenzyl)-6-(D-ribitylimino)-5,6-dihydrouracil + S-adenosyl-L-methionine = 7,8-didemethyl-8-hydroxy-5-deazariboflavin + 5'-deoxyadenosine + L-methionine + NH4(+) + H(+)</text>
        <dbReference type="Rhea" id="RHEA:55204"/>
        <dbReference type="ChEBI" id="CHEBI:15378"/>
        <dbReference type="ChEBI" id="CHEBI:17319"/>
        <dbReference type="ChEBI" id="CHEBI:28938"/>
        <dbReference type="ChEBI" id="CHEBI:57844"/>
        <dbReference type="ChEBI" id="CHEBI:59789"/>
        <dbReference type="ChEBI" id="CHEBI:59904"/>
        <dbReference type="ChEBI" id="CHEBI:85936"/>
        <dbReference type="EC" id="4.3.1.32"/>
    </reaction>
</comment>
<comment type="cofactor">
    <cofactor evidence="1">
        <name>[4Fe-4S] cluster</name>
        <dbReference type="ChEBI" id="CHEBI:49883"/>
    </cofactor>
    <text evidence="1">Binds 1 [4Fe-4S] cluster. The cluster is coordinated with 3 cysteines and an exchangeable S-adenosyl-L-methionine.</text>
</comment>
<comment type="pathway">
    <text evidence="1">Cofactor biosynthesis; coenzyme F0 biosynthesis.</text>
</comment>
<comment type="subunit">
    <text evidence="1">Consists of two subunits, CofG and CofH.</text>
</comment>
<comment type="similarity">
    <text evidence="1">Belongs to the radical SAM superfamily. CofG family.</text>
</comment>
<comment type="sequence caution" evidence="3">
    <conflict type="erroneous initiation">
        <sequence resource="EMBL-CDS" id="AAM32190"/>
    </conflict>
</comment>
<proteinExistence type="inferred from homology"/>
<accession>Q8PU55</accession>